<organism>
    <name type="scientific">Notechis scutatus scutatus</name>
    <name type="common">Mainland tiger snake</name>
    <name type="synonym">Common tiger snake</name>
    <dbReference type="NCBI Taxonomy" id="70142"/>
    <lineage>
        <taxon>Eukaryota</taxon>
        <taxon>Metazoa</taxon>
        <taxon>Chordata</taxon>
        <taxon>Craniata</taxon>
        <taxon>Vertebrata</taxon>
        <taxon>Euteleostomi</taxon>
        <taxon>Lepidosauria</taxon>
        <taxon>Squamata</taxon>
        <taxon>Bifurcata</taxon>
        <taxon>Unidentata</taxon>
        <taxon>Episquamata</taxon>
        <taxon>Toxicofera</taxon>
        <taxon>Serpentes</taxon>
        <taxon>Colubroidea</taxon>
        <taxon>Elapidae</taxon>
        <taxon>Hydrophiinae</taxon>
        <taxon>Notechis</taxon>
    </lineage>
</organism>
<keyword id="KW-0044">Antibiotic</keyword>
<keyword id="KW-0929">Antimicrobial</keyword>
<keyword id="KW-1015">Disulfide bond</keyword>
<keyword id="KW-0964">Secreted</keyword>
<keyword id="KW-0732">Signal</keyword>
<evidence type="ECO:0000250" key="1">
    <source>
        <dbReference type="UniProtKB" id="P83952"/>
    </source>
</evidence>
<evidence type="ECO:0000255" key="2"/>
<evidence type="ECO:0000255" key="3">
    <source>
        <dbReference type="PROSITE-ProRule" id="PRU00722"/>
    </source>
</evidence>
<evidence type="ECO:0000303" key="4">
    <source>
    </source>
</evidence>
<evidence type="ECO:0000305" key="5"/>
<evidence type="ECO:0000305" key="6">
    <source>
    </source>
</evidence>
<sequence length="75" mass="8434">MSSGGLLLLLGLLTLWAELTPVSSQDRPKKPGLCPPRPQKPPCVRECKNDWICPGEQKCCRYGCIYECRDPIFVK</sequence>
<feature type="signal peptide" evidence="2">
    <location>
        <begin position="1"/>
        <end position="24"/>
    </location>
</feature>
<feature type="chain" id="PRO_5000395575" description="Notewaprin-b">
    <location>
        <begin position="25"/>
        <end position="75"/>
    </location>
</feature>
<feature type="domain" description="WAP" evidence="3">
    <location>
        <begin position="27"/>
        <end position="72"/>
    </location>
</feature>
<feature type="disulfide bond" evidence="3">
    <location>
        <begin position="34"/>
        <end position="60"/>
    </location>
</feature>
<feature type="disulfide bond" evidence="3">
    <location>
        <begin position="43"/>
        <end position="64"/>
    </location>
</feature>
<feature type="disulfide bond" evidence="3">
    <location>
        <begin position="47"/>
        <end position="59"/>
    </location>
</feature>
<feature type="disulfide bond" evidence="3">
    <location>
        <begin position="53"/>
        <end position="68"/>
    </location>
</feature>
<proteinExistence type="inferred from homology"/>
<comment type="function">
    <text evidence="1">Damages membranes of susceptible bacteria. Has no hemolytic activity. Not toxic to mice. Does not inhibit the proteinases elastase and cathepsin G.</text>
</comment>
<comment type="subcellular location">
    <subcellularLocation>
        <location evidence="6">Secreted</location>
    </subcellularLocation>
</comment>
<comment type="tissue specificity">
    <text evidence="6">Expressed by the venom gland.</text>
</comment>
<comment type="similarity">
    <text evidence="5">Belongs to the venom waprin family.</text>
</comment>
<protein>
    <recommendedName>
        <fullName evidence="4">Notewaprin-b</fullName>
    </recommendedName>
</protein>
<accession>B5G6H5</accession>
<reference key="1">
    <citation type="journal article" date="2008" name="Cell. Mol. Life Sci.">
        <title>Common evolution of waprin and Kunitz-like toxin families in Australian venomous snakes.</title>
        <authorList>
            <person name="St Pierre L."/>
            <person name="Earl S.T."/>
            <person name="Filippovich I."/>
            <person name="Sorokina N."/>
            <person name="Masci P.P."/>
            <person name="De Jersey J."/>
            <person name="Lavin M.F."/>
        </authorList>
    </citation>
    <scope>NUCLEOTIDE SEQUENCE [GENOMIC DNA / MRNA]</scope>
    <source>
        <tissue>Venom gland</tissue>
    </source>
</reference>
<name>WAPB_NOTSC</name>
<dbReference type="EMBL" id="DQ917565">
    <property type="protein sequence ID" value="ABK63594.1"/>
    <property type="molecule type" value="mRNA"/>
</dbReference>
<dbReference type="EMBL" id="EU401826">
    <property type="protein sequence ID" value="ACC77775.1"/>
    <property type="molecule type" value="Genomic_DNA"/>
</dbReference>
<dbReference type="SMR" id="B5G6H5"/>
<dbReference type="GO" id="GO:0005576">
    <property type="term" value="C:extracellular region"/>
    <property type="evidence" value="ECO:0000250"/>
    <property type="project" value="UniProtKB"/>
</dbReference>
<dbReference type="GO" id="GO:0005615">
    <property type="term" value="C:extracellular space"/>
    <property type="evidence" value="ECO:0007669"/>
    <property type="project" value="TreeGrafter"/>
</dbReference>
<dbReference type="GO" id="GO:0004867">
    <property type="term" value="F:serine-type endopeptidase inhibitor activity"/>
    <property type="evidence" value="ECO:0007669"/>
    <property type="project" value="TreeGrafter"/>
</dbReference>
<dbReference type="GO" id="GO:0019731">
    <property type="term" value="P:antibacterial humoral response"/>
    <property type="evidence" value="ECO:0007669"/>
    <property type="project" value="TreeGrafter"/>
</dbReference>
<dbReference type="GO" id="GO:0045087">
    <property type="term" value="P:innate immune response"/>
    <property type="evidence" value="ECO:0007669"/>
    <property type="project" value="TreeGrafter"/>
</dbReference>
<dbReference type="GO" id="GO:0044278">
    <property type="term" value="P:venom-mediated disruption of cell wall in another organism"/>
    <property type="evidence" value="ECO:0000250"/>
    <property type="project" value="UniProtKB"/>
</dbReference>
<dbReference type="Gene3D" id="4.10.75.10">
    <property type="entry name" value="Elafin-like"/>
    <property type="match status" value="1"/>
</dbReference>
<dbReference type="InterPro" id="IPR036645">
    <property type="entry name" value="Elafin-like_sf"/>
</dbReference>
<dbReference type="InterPro" id="IPR008197">
    <property type="entry name" value="WAP_dom"/>
</dbReference>
<dbReference type="InterPro" id="IPR050514">
    <property type="entry name" value="WAP_four-disulfide_core"/>
</dbReference>
<dbReference type="PANTHER" id="PTHR19441:SF44">
    <property type="entry name" value="ANTILEUKOPROTEINASE"/>
    <property type="match status" value="1"/>
</dbReference>
<dbReference type="PANTHER" id="PTHR19441">
    <property type="entry name" value="WHEY ACDIC PROTEIN WAP"/>
    <property type="match status" value="1"/>
</dbReference>
<dbReference type="Pfam" id="PF00095">
    <property type="entry name" value="WAP"/>
    <property type="match status" value="1"/>
</dbReference>
<dbReference type="PRINTS" id="PR00003">
    <property type="entry name" value="4DISULPHCORE"/>
</dbReference>
<dbReference type="SMART" id="SM00217">
    <property type="entry name" value="WAP"/>
    <property type="match status" value="1"/>
</dbReference>
<dbReference type="SUPFAM" id="SSF57256">
    <property type="entry name" value="Elafin-like"/>
    <property type="match status" value="1"/>
</dbReference>
<dbReference type="PROSITE" id="PS51390">
    <property type="entry name" value="WAP"/>
    <property type="match status" value="1"/>
</dbReference>